<gene>
    <name type="primary">FARP1</name>
</gene>
<comment type="function">
    <text evidence="1">Functions as a guanine nucleotide exchange factor for RAC1. May play a role in semaphorin signaling. Plays a role in the assembly and disassembly of dendritic filopodia, the formation of dendritic spines, regulation of dendrite length and ultimately the formation of synapses (By similarity).</text>
</comment>
<comment type="subunit">
    <text evidence="1">Interacts with CADM1. Interacts with RAC1 (By similarity).</text>
</comment>
<comment type="subcellular location">
    <subcellularLocation>
        <location>Cell membrane</location>
        <topology>Peripheral membrane protein</topology>
        <orientation>Cytoplasmic side</orientation>
    </subcellularLocation>
    <subcellularLocation>
        <location>Synapse</location>
    </subcellularLocation>
    <subcellularLocation>
        <location evidence="1">Synapse</location>
        <location evidence="1">Synaptosome</location>
    </subcellularLocation>
    <subcellularLocation>
        <location evidence="1">Cytoplasm</location>
        <location evidence="1">Cytosol</location>
    </subcellularLocation>
    <subcellularLocation>
        <location evidence="1">Cell projection</location>
        <location evidence="1">Filopodium</location>
    </subcellularLocation>
    <subcellularLocation>
        <location evidence="1">Cell projection</location>
        <location evidence="1">Dendrite</location>
    </subcellularLocation>
    <subcellularLocation>
        <location evidence="1">Cell projection</location>
        <location evidence="1">Dendritic spine</location>
    </subcellularLocation>
    <text evidence="1">Recruited to the cell membrane via interaction with CADM1.</text>
</comment>
<comment type="domain">
    <text evidence="1">Intramolecular interaction between the DH domain and the PH domains can stabilize the protein in an autoinhibited conformation.</text>
</comment>
<name>FARP1_PONAB</name>
<feature type="chain" id="PRO_0000232754" description="FERM, ARHGEF and pleckstrin domain-containing protein 1">
    <location>
        <begin position="1"/>
        <end position="1045"/>
    </location>
</feature>
<feature type="domain" description="FERM" evidence="5">
    <location>
        <begin position="40"/>
        <end position="320"/>
    </location>
</feature>
<feature type="domain" description="DH" evidence="4">
    <location>
        <begin position="540"/>
        <end position="730"/>
    </location>
</feature>
<feature type="domain" description="PH 1" evidence="6">
    <location>
        <begin position="759"/>
        <end position="856"/>
    </location>
</feature>
<feature type="domain" description="PH 2" evidence="6">
    <location>
        <begin position="932"/>
        <end position="1029"/>
    </location>
</feature>
<feature type="region of interest" description="Disordered" evidence="7">
    <location>
        <begin position="1"/>
        <end position="37"/>
    </location>
</feature>
<feature type="region of interest" description="Disordered" evidence="7">
    <location>
        <begin position="392"/>
        <end position="534"/>
    </location>
</feature>
<feature type="region of interest" description="Disordered" evidence="7">
    <location>
        <begin position="866"/>
        <end position="902"/>
    </location>
</feature>
<feature type="compositionally biased region" description="Polar residues" evidence="7">
    <location>
        <begin position="471"/>
        <end position="489"/>
    </location>
</feature>
<feature type="compositionally biased region" description="Polar residues" evidence="7">
    <location>
        <begin position="496"/>
        <end position="511"/>
    </location>
</feature>
<feature type="modified residue" description="Phosphoserine" evidence="2">
    <location>
        <position position="20"/>
    </location>
</feature>
<feature type="modified residue" description="Phosphoserine" evidence="2">
    <location>
        <position position="23"/>
    </location>
</feature>
<feature type="modified residue" description="Phosphothreonine" evidence="3">
    <location>
        <position position="24"/>
    </location>
</feature>
<feature type="modified residue" description="Phosphoserine" evidence="3">
    <location>
        <position position="340"/>
    </location>
</feature>
<feature type="modified residue" description="Phosphoserine" evidence="3">
    <location>
        <position position="373"/>
    </location>
</feature>
<feature type="modified residue" description="Phosphoserine" evidence="2">
    <location>
        <position position="389"/>
    </location>
</feature>
<feature type="modified residue" description="Phosphoserine" evidence="3">
    <location>
        <position position="403"/>
    </location>
</feature>
<feature type="modified residue" description="Phosphoserine" evidence="3">
    <location>
        <position position="418"/>
    </location>
</feature>
<feature type="modified residue" description="Phosphoserine" evidence="3">
    <location>
        <position position="427"/>
    </location>
</feature>
<feature type="modified residue" description="Phosphoserine" evidence="2">
    <location>
        <position position="433"/>
    </location>
</feature>
<feature type="modified residue" description="Phosphoserine" evidence="3">
    <location>
        <position position="510"/>
    </location>
</feature>
<feature type="modified residue" description="Phosphoserine" evidence="3">
    <location>
        <position position="514"/>
    </location>
</feature>
<feature type="modified residue" description="Phosphoserine" evidence="3">
    <location>
        <position position="833"/>
    </location>
</feature>
<feature type="modified residue" description="Phosphoserine" evidence="3">
    <location>
        <position position="872"/>
    </location>
</feature>
<feature type="modified residue" description="Phosphoserine" evidence="2">
    <location>
        <position position="878"/>
    </location>
</feature>
<feature type="modified residue" description="Phosphothreonine" evidence="3">
    <location>
        <position position="883"/>
    </location>
</feature>
<feature type="modified residue" description="Phosphoserine" evidence="3">
    <location>
        <position position="889"/>
    </location>
</feature>
<feature type="modified residue" description="Phosphoserine" evidence="2">
    <location>
        <position position="896"/>
    </location>
</feature>
<feature type="modified residue" description="Phosphoserine" evidence="2">
    <location>
        <position position="899"/>
    </location>
</feature>
<dbReference type="EMBL" id="CR859100">
    <property type="protein sequence ID" value="CAH91292.1"/>
    <property type="molecule type" value="mRNA"/>
</dbReference>
<dbReference type="RefSeq" id="NP_001125765.1">
    <property type="nucleotide sequence ID" value="NM_001132293.1"/>
</dbReference>
<dbReference type="SMR" id="Q5RAB8"/>
<dbReference type="FunCoup" id="Q5RAB8">
    <property type="interactions" value="793"/>
</dbReference>
<dbReference type="STRING" id="9601.ENSPPYP00000006225"/>
<dbReference type="GeneID" id="100172691"/>
<dbReference type="KEGG" id="pon:100172691"/>
<dbReference type="CTD" id="10160"/>
<dbReference type="eggNOG" id="KOG3531">
    <property type="taxonomic scope" value="Eukaryota"/>
</dbReference>
<dbReference type="InParanoid" id="Q5RAB8"/>
<dbReference type="OrthoDB" id="9990815at2759"/>
<dbReference type="Proteomes" id="UP000001595">
    <property type="component" value="Unplaced"/>
</dbReference>
<dbReference type="GO" id="GO:0009898">
    <property type="term" value="C:cytoplasmic side of plasma membrane"/>
    <property type="evidence" value="ECO:0000250"/>
    <property type="project" value="UniProtKB"/>
</dbReference>
<dbReference type="GO" id="GO:0005856">
    <property type="term" value="C:cytoskeleton"/>
    <property type="evidence" value="ECO:0007669"/>
    <property type="project" value="InterPro"/>
</dbReference>
<dbReference type="GO" id="GO:0005829">
    <property type="term" value="C:cytosol"/>
    <property type="evidence" value="ECO:0000250"/>
    <property type="project" value="UniProtKB"/>
</dbReference>
<dbReference type="GO" id="GO:0030425">
    <property type="term" value="C:dendrite"/>
    <property type="evidence" value="ECO:0000250"/>
    <property type="project" value="UniProtKB"/>
</dbReference>
<dbReference type="GO" id="GO:0043197">
    <property type="term" value="C:dendritic spine"/>
    <property type="evidence" value="ECO:0007669"/>
    <property type="project" value="UniProtKB-SubCell"/>
</dbReference>
<dbReference type="GO" id="GO:0030175">
    <property type="term" value="C:filopodium"/>
    <property type="evidence" value="ECO:0007669"/>
    <property type="project" value="UniProtKB-SubCell"/>
</dbReference>
<dbReference type="GO" id="GO:0008092">
    <property type="term" value="F:cytoskeletal protein binding"/>
    <property type="evidence" value="ECO:0007669"/>
    <property type="project" value="InterPro"/>
</dbReference>
<dbReference type="GO" id="GO:0005085">
    <property type="term" value="F:guanyl-nucleotide exchange factor activity"/>
    <property type="evidence" value="ECO:0000250"/>
    <property type="project" value="UniProtKB"/>
</dbReference>
<dbReference type="GO" id="GO:0048813">
    <property type="term" value="P:dendrite morphogenesis"/>
    <property type="evidence" value="ECO:0000250"/>
    <property type="project" value="UniProtKB"/>
</dbReference>
<dbReference type="GO" id="GO:0007416">
    <property type="term" value="P:synapse assembly"/>
    <property type="evidence" value="ECO:0000250"/>
    <property type="project" value="UniProtKB"/>
</dbReference>
<dbReference type="CDD" id="cd14473">
    <property type="entry name" value="FERM_B-lobe"/>
    <property type="match status" value="1"/>
</dbReference>
<dbReference type="CDD" id="cd13193">
    <property type="entry name" value="FERM_C_FARP1-like"/>
    <property type="match status" value="1"/>
</dbReference>
<dbReference type="CDD" id="cd01220">
    <property type="entry name" value="PH1_FARP1-like"/>
    <property type="match status" value="1"/>
</dbReference>
<dbReference type="CDD" id="cd13235">
    <property type="entry name" value="PH2_FARP1-like"/>
    <property type="match status" value="1"/>
</dbReference>
<dbReference type="CDD" id="cd00160">
    <property type="entry name" value="RhoGEF"/>
    <property type="match status" value="1"/>
</dbReference>
<dbReference type="FunFam" id="2.30.29.30:FF:000002">
    <property type="entry name" value="Band 4.1-like protein 5 isoform 1"/>
    <property type="match status" value="1"/>
</dbReference>
<dbReference type="FunFam" id="3.10.20.90:FF:000040">
    <property type="entry name" value="FERM, RhoGEF and pleckstrin domain-containing protein"/>
    <property type="match status" value="1"/>
</dbReference>
<dbReference type="FunFam" id="1.20.80.10:FF:000005">
    <property type="entry name" value="FERM, RhoGEF and pleckstrin domain-containing protein 1"/>
    <property type="match status" value="1"/>
</dbReference>
<dbReference type="FunFam" id="1.20.900.10:FF:000021">
    <property type="entry name" value="FERM, RhoGEF and pleckstrin domain-containing protein 1"/>
    <property type="match status" value="1"/>
</dbReference>
<dbReference type="FunFam" id="2.30.29.30:FF:000046">
    <property type="entry name" value="FERM, RhoGEF and pleckstrin domain-containing protein 1"/>
    <property type="match status" value="1"/>
</dbReference>
<dbReference type="Gene3D" id="1.20.80.10">
    <property type="match status" value="1"/>
</dbReference>
<dbReference type="Gene3D" id="1.20.900.10">
    <property type="entry name" value="Dbl homology (DH) domain"/>
    <property type="match status" value="1"/>
</dbReference>
<dbReference type="Gene3D" id="3.10.20.90">
    <property type="entry name" value="Phosphatidylinositol 3-kinase Catalytic Subunit, Chain A, domain 1"/>
    <property type="match status" value="1"/>
</dbReference>
<dbReference type="Gene3D" id="2.30.29.30">
    <property type="entry name" value="Pleckstrin-homology domain (PH domain)/Phosphotyrosine-binding domain (PTB)"/>
    <property type="match status" value="3"/>
</dbReference>
<dbReference type="InterPro" id="IPR019749">
    <property type="entry name" value="Band_41_domain"/>
</dbReference>
<dbReference type="InterPro" id="IPR035899">
    <property type="entry name" value="DBL_dom_sf"/>
</dbReference>
<dbReference type="InterPro" id="IPR000219">
    <property type="entry name" value="DH_dom"/>
</dbReference>
<dbReference type="InterPro" id="IPR000798">
    <property type="entry name" value="Ez/rad/moesin-like"/>
</dbReference>
<dbReference type="InterPro" id="IPR014847">
    <property type="entry name" value="FA"/>
</dbReference>
<dbReference type="InterPro" id="IPR041788">
    <property type="entry name" value="FARP1/FARP2/FRMD7_FERM_C"/>
</dbReference>
<dbReference type="InterPro" id="IPR014352">
    <property type="entry name" value="FERM/acyl-CoA-bd_prot_sf"/>
</dbReference>
<dbReference type="InterPro" id="IPR035963">
    <property type="entry name" value="FERM_2"/>
</dbReference>
<dbReference type="InterPro" id="IPR019748">
    <property type="entry name" value="FERM_central"/>
</dbReference>
<dbReference type="InterPro" id="IPR019747">
    <property type="entry name" value="FERM_CS"/>
</dbReference>
<dbReference type="InterPro" id="IPR000299">
    <property type="entry name" value="FERM_domain"/>
</dbReference>
<dbReference type="InterPro" id="IPR018979">
    <property type="entry name" value="FERM_N"/>
</dbReference>
<dbReference type="InterPro" id="IPR018980">
    <property type="entry name" value="FERM_PH-like_C"/>
</dbReference>
<dbReference type="InterPro" id="IPR011993">
    <property type="entry name" value="PH-like_dom_sf"/>
</dbReference>
<dbReference type="InterPro" id="IPR001849">
    <property type="entry name" value="PH_domain"/>
</dbReference>
<dbReference type="InterPro" id="IPR051835">
    <property type="entry name" value="RAC1-GEF"/>
</dbReference>
<dbReference type="InterPro" id="IPR029071">
    <property type="entry name" value="Ubiquitin-like_domsf"/>
</dbReference>
<dbReference type="PANTHER" id="PTHR45858">
    <property type="entry name" value="FERM DOMAIN CONTAINING PROTEIN"/>
    <property type="match status" value="1"/>
</dbReference>
<dbReference type="PANTHER" id="PTHR45858:SF2">
    <property type="entry name" value="FERM, ARHGEF AND PLECKSTRIN DOMAIN-CONTAINING PROTEIN 1"/>
    <property type="match status" value="1"/>
</dbReference>
<dbReference type="Pfam" id="PF08736">
    <property type="entry name" value="FA"/>
    <property type="match status" value="1"/>
</dbReference>
<dbReference type="Pfam" id="PF09380">
    <property type="entry name" value="FERM_C"/>
    <property type="match status" value="1"/>
</dbReference>
<dbReference type="Pfam" id="PF00373">
    <property type="entry name" value="FERM_M"/>
    <property type="match status" value="1"/>
</dbReference>
<dbReference type="Pfam" id="PF09379">
    <property type="entry name" value="FERM_N"/>
    <property type="match status" value="1"/>
</dbReference>
<dbReference type="Pfam" id="PF00169">
    <property type="entry name" value="PH"/>
    <property type="match status" value="2"/>
</dbReference>
<dbReference type="Pfam" id="PF00621">
    <property type="entry name" value="RhoGEF"/>
    <property type="match status" value="1"/>
</dbReference>
<dbReference type="PRINTS" id="PR00935">
    <property type="entry name" value="BAND41"/>
</dbReference>
<dbReference type="PRINTS" id="PR00661">
    <property type="entry name" value="ERMFAMILY"/>
</dbReference>
<dbReference type="SMART" id="SM00295">
    <property type="entry name" value="B41"/>
    <property type="match status" value="1"/>
</dbReference>
<dbReference type="SMART" id="SM01195">
    <property type="entry name" value="FA"/>
    <property type="match status" value="1"/>
</dbReference>
<dbReference type="SMART" id="SM01196">
    <property type="entry name" value="FERM_C"/>
    <property type="match status" value="1"/>
</dbReference>
<dbReference type="SMART" id="SM00233">
    <property type="entry name" value="PH"/>
    <property type="match status" value="2"/>
</dbReference>
<dbReference type="SMART" id="SM00325">
    <property type="entry name" value="RhoGEF"/>
    <property type="match status" value="1"/>
</dbReference>
<dbReference type="SUPFAM" id="SSF48065">
    <property type="entry name" value="DBL homology domain (DH-domain)"/>
    <property type="match status" value="1"/>
</dbReference>
<dbReference type="SUPFAM" id="SSF50729">
    <property type="entry name" value="PH domain-like"/>
    <property type="match status" value="3"/>
</dbReference>
<dbReference type="SUPFAM" id="SSF47031">
    <property type="entry name" value="Second domain of FERM"/>
    <property type="match status" value="1"/>
</dbReference>
<dbReference type="SUPFAM" id="SSF54236">
    <property type="entry name" value="Ubiquitin-like"/>
    <property type="match status" value="1"/>
</dbReference>
<dbReference type="PROSITE" id="PS50010">
    <property type="entry name" value="DH_2"/>
    <property type="match status" value="1"/>
</dbReference>
<dbReference type="PROSITE" id="PS00660">
    <property type="entry name" value="FERM_1"/>
    <property type="match status" value="1"/>
</dbReference>
<dbReference type="PROSITE" id="PS50057">
    <property type="entry name" value="FERM_3"/>
    <property type="match status" value="1"/>
</dbReference>
<dbReference type="PROSITE" id="PS50003">
    <property type="entry name" value="PH_DOMAIN"/>
    <property type="match status" value="2"/>
</dbReference>
<keyword id="KW-1003">Cell membrane</keyword>
<keyword id="KW-0966">Cell projection</keyword>
<keyword id="KW-0963">Cytoplasm</keyword>
<keyword id="KW-0217">Developmental protein</keyword>
<keyword id="KW-0344">Guanine-nucleotide releasing factor</keyword>
<keyword id="KW-0472">Membrane</keyword>
<keyword id="KW-0597">Phosphoprotein</keyword>
<keyword id="KW-1185">Reference proteome</keyword>
<keyword id="KW-0677">Repeat</keyword>
<keyword id="KW-0770">Synapse</keyword>
<keyword id="KW-0771">Synaptosome</keyword>
<reference key="1">
    <citation type="submission" date="2004-11" db="EMBL/GenBank/DDBJ databases">
        <authorList>
            <consortium name="The German cDNA consortium"/>
        </authorList>
    </citation>
    <scope>NUCLEOTIDE SEQUENCE [LARGE SCALE MRNA]</scope>
    <source>
        <tissue>Kidney</tissue>
    </source>
</reference>
<protein>
    <recommendedName>
        <fullName>FERM, ARHGEF and pleckstrin domain-containing protein 1</fullName>
    </recommendedName>
    <alternativeName>
        <fullName>FERM, RhoGEF and pleckstrin domain-containing protein 1</fullName>
    </alternativeName>
</protein>
<organism>
    <name type="scientific">Pongo abelii</name>
    <name type="common">Sumatran orangutan</name>
    <name type="synonym">Pongo pygmaeus abelii</name>
    <dbReference type="NCBI Taxonomy" id="9601"/>
    <lineage>
        <taxon>Eukaryota</taxon>
        <taxon>Metazoa</taxon>
        <taxon>Chordata</taxon>
        <taxon>Craniata</taxon>
        <taxon>Vertebrata</taxon>
        <taxon>Euteleostomi</taxon>
        <taxon>Mammalia</taxon>
        <taxon>Eutheria</taxon>
        <taxon>Euarchontoglires</taxon>
        <taxon>Primates</taxon>
        <taxon>Haplorrhini</taxon>
        <taxon>Catarrhini</taxon>
        <taxon>Hominidae</taxon>
        <taxon>Pongo</taxon>
    </lineage>
</organism>
<evidence type="ECO:0000250" key="1"/>
<evidence type="ECO:0000250" key="2">
    <source>
        <dbReference type="UniProtKB" id="F8VPU2"/>
    </source>
</evidence>
<evidence type="ECO:0000250" key="3">
    <source>
        <dbReference type="UniProtKB" id="Q9Y4F1"/>
    </source>
</evidence>
<evidence type="ECO:0000255" key="4">
    <source>
        <dbReference type="PROSITE-ProRule" id="PRU00062"/>
    </source>
</evidence>
<evidence type="ECO:0000255" key="5">
    <source>
        <dbReference type="PROSITE-ProRule" id="PRU00084"/>
    </source>
</evidence>
<evidence type="ECO:0000255" key="6">
    <source>
        <dbReference type="PROSITE-ProRule" id="PRU00145"/>
    </source>
</evidence>
<evidence type="ECO:0000256" key="7">
    <source>
        <dbReference type="SAM" id="MobiDB-lite"/>
    </source>
</evidence>
<accession>Q5RAB8</accession>
<sequence length="1045" mass="118583">MGEIEQRPTPGSRLGAPENSGISTLERGQKPPPTPSGKLVSIKIQMLDDTQEAFEVPQRAPGKVLLDAVCNHLNLVEGDYFGLECPDHKKITVWLDLLKPLVKQIRRPKHVVVKFVVKFFPPDHTQLQEELTRYLFALQVKQDLAQGRLTCNDTSAALLISHIVQSEIGDFDEALDREHLAKNKYIPQQDALEDKIVEFHHNHIGQTPAESDFQLLEIARRLEMYGIRLHPAKDREGTKINLAVANTGILVFQGFTKINAFNWAKVRKLSFKRKRFLIKLRPDANSAYQDTLEFLMASRDFCKSFWKICVEHHAFFRLFEEPKPKPKPVLFSRGSSFRFSGRTQKQVLDYVKEGGHKKVQFERKHSKIHSIRSLASQPTELYSEVLEQSQQSASLTFGEGAESPGGQSCQQGKEPKVSPGEPGSHPSPVPRRSPAGNKQADGAASAPTEEEEEVVKDRTQQSKPQPPQPSTGSLTGSPHLSELSVNSQGGVAPANVTLSPNLSPDTKQASPLISPLLNDQACPRTDDEDEGRRKRFPTDKAYFIAKEVSTTERTYLKDLEVITSWFQSAVSKEDAMPEALKSLIFPNFEPLHKFHTNFLKEIEQRLALWEGRSNAQIRDYQRIGDVMLKNIQGMKHLAVHLWKHSEALEALENGIKSSRRLENFCRDFELQKVCYLPLNTFLLRPLHRHMHYKQVLERLCKHHPPSHADFRDCRAALAGITEMVAQLHGTMIKMENFQKLHELKKDLIGIDNLVVPGREFIRLGSLSKLSGKGLQQRMFFLFNDVLLYTSRGLTASNQFKVHGQLPLYGMTIKESEDEWGVPHCLTLRGQRQSIIVAASSRSEMEKWVEDIQMAIDLAEKNSSLAPEFLASSPPDNKSPDEATAADQESEDDLSASRTSLERQAPHRGNTMVHVCWHRNTSVSMVDFSVAVENQLSGNLLRKFKNSNGWQKLWVVFTNFCLFFYKSHQDNHPLASLPLLGYSLTIPTESENIHKDYVFKLHFKSHVYYFRAESEYTFERWMEVIRSATSSASRVHVSSHKESLVY</sequence>
<proteinExistence type="evidence at transcript level"/>